<accession>Q4V2J8</accession>
<keyword id="KW-0378">Hydrolase</keyword>
<keyword id="KW-0479">Metal-binding</keyword>
<keyword id="KW-0482">Metalloprotease</keyword>
<keyword id="KW-0645">Protease</keyword>
<keyword id="KW-1185">Reference proteome</keyword>
<keyword id="KW-0862">Zinc</keyword>
<name>DTML_BURMA</name>
<gene>
    <name type="primary">dtmL</name>
    <name type="ordered locus">BMAA1111</name>
</gene>
<protein>
    <recommendedName>
        <fullName>Dictomallein</fullName>
        <ecNumber>3.4.24.-</ecNumber>
    </recommendedName>
</protein>
<organism>
    <name type="scientific">Burkholderia mallei (strain ATCC 23344)</name>
    <dbReference type="NCBI Taxonomy" id="243160"/>
    <lineage>
        <taxon>Bacteria</taxon>
        <taxon>Pseudomonadati</taxon>
        <taxon>Pseudomonadota</taxon>
        <taxon>Betaproteobacteria</taxon>
        <taxon>Burkholderiales</taxon>
        <taxon>Burkholderiaceae</taxon>
        <taxon>Burkholderia</taxon>
        <taxon>pseudomallei group</taxon>
    </lineage>
</organism>
<proteinExistence type="inferred from homology"/>
<comment type="cofactor">
    <cofactor evidence="3">
        <name>Zn(2+)</name>
        <dbReference type="ChEBI" id="CHEBI:29105"/>
    </cofactor>
    <text evidence="3">Binds 1 zinc ion per subunit.</text>
</comment>
<comment type="similarity">
    <text evidence="3">Belongs to the dictomallein family.</text>
</comment>
<comment type="sequence caution" evidence="3">
    <conflict type="erroneous initiation">
        <sequence resource="EMBL-CDS" id="AAY59193"/>
    </conflict>
</comment>
<feature type="chain" id="PRO_0000322651" description="Dictomallein">
    <location>
        <begin position="1"/>
        <end position="687"/>
    </location>
</feature>
<feature type="domain" description="Peptidase M66">
    <location>
        <begin position="233"/>
        <end position="501"/>
    </location>
</feature>
<feature type="region of interest" description="Disordered" evidence="2">
    <location>
        <begin position="1"/>
        <end position="45"/>
    </location>
</feature>
<feature type="region of interest" description="Disordered" evidence="2">
    <location>
        <begin position="73"/>
        <end position="112"/>
    </location>
</feature>
<feature type="active site" evidence="1">
    <location>
        <position position="394"/>
    </location>
</feature>
<feature type="binding site" evidence="1">
    <location>
        <position position="393"/>
    </location>
    <ligand>
        <name>Zn(2+)</name>
        <dbReference type="ChEBI" id="CHEBI:29105"/>
        <note>catalytic</note>
    </ligand>
</feature>
<feature type="binding site" evidence="1">
    <location>
        <position position="397"/>
    </location>
    <ligand>
        <name>Zn(2+)</name>
        <dbReference type="ChEBI" id="CHEBI:29105"/>
        <note>catalytic</note>
    </ligand>
</feature>
<feature type="binding site" evidence="1">
    <location>
        <position position="403"/>
    </location>
    <ligand>
        <name>Zn(2+)</name>
        <dbReference type="ChEBI" id="CHEBI:29105"/>
        <note>catalytic</note>
    </ligand>
</feature>
<evidence type="ECO:0000250" key="1"/>
<evidence type="ECO:0000256" key="2">
    <source>
        <dbReference type="SAM" id="MobiDB-lite"/>
    </source>
</evidence>
<evidence type="ECO:0000305" key="3"/>
<reference key="1">
    <citation type="journal article" date="2004" name="Proc. Natl. Acad. Sci. U.S.A.">
        <title>Structural flexibility in the Burkholderia mallei genome.</title>
        <authorList>
            <person name="Nierman W.C."/>
            <person name="DeShazer D."/>
            <person name="Kim H.S."/>
            <person name="Tettelin H."/>
            <person name="Nelson K.E."/>
            <person name="Feldblyum T.V."/>
            <person name="Ulrich R.L."/>
            <person name="Ronning C.M."/>
            <person name="Brinkac L.M."/>
            <person name="Daugherty S.C."/>
            <person name="Davidsen T.D."/>
            <person name="DeBoy R.T."/>
            <person name="Dimitrov G."/>
            <person name="Dodson R.J."/>
            <person name="Durkin A.S."/>
            <person name="Gwinn M.L."/>
            <person name="Haft D.H."/>
            <person name="Khouri H.M."/>
            <person name="Kolonay J.F."/>
            <person name="Madupu R."/>
            <person name="Mohammoud Y."/>
            <person name="Nelson W.C."/>
            <person name="Radune D."/>
            <person name="Romero C.M."/>
            <person name="Sarria S."/>
            <person name="Selengut J."/>
            <person name="Shamblin C."/>
            <person name="Sullivan S.A."/>
            <person name="White O."/>
            <person name="Yu Y."/>
            <person name="Zafar N."/>
            <person name="Zhou L."/>
            <person name="Fraser C.M."/>
        </authorList>
    </citation>
    <scope>NUCLEOTIDE SEQUENCE [LARGE SCALE GENOMIC DNA]</scope>
    <source>
        <strain>ATCC 23344</strain>
    </source>
</reference>
<sequence>MGNGERPPARRPDSSGSPPPAADAPAASNHPFSSHDTKHMTSRRLASRTAVAASLSALMLAACGGDDSANAPTAGGAAPLTPAVASPAGPTGSTPGSTPGATTAPAPSSTSAGQLSVDKMAFAQTHVVPSGGLSWTLPNASASLRPISRRDALVLVAIGQADAVQPVLEAWKDGAKLGALALSPPSALPPTESGGRAYANDRWSAVVPAAWMVPGVSFSVSASNYTSSVAQAPVFGTDADVQLTILPFYLFGADDTNSPPLSTTQAPDAATQQEIFAKWPTAELKVRTHPAGRFSLATVVVGPRADRTGAAQPAYPVTALDQQKDGYGVMSAMLTLITNMRTANGDGPLNDQYYAPLIALNSNGQFANLGGGLGGVGSGAAVGDHRYTGIFIHEQGHAFGLNHAGDEYAKGAYPYAGGSLSGSVWGYDPNHREFLDVLVPTTASSYAKCASSHQLDAQGRCYKQDPMQGGAGDQSSGYKFATFSDYNTGRMQAWIASRVLADPASSTGYSKWDSAAQARAPYTPTTDNNGLYGVNQNLPVQAGVPVHTIVVSFSKAGSAGASYIYPPFSYTGNLIATFDPTSAADRQAITVDKGTYPWYCKGTGCDYTLRVTYADGSRTYRVLQGGFRAWWTPTVYDANATNPLSGSSFRVWAINVPGDKRIGKIELLDTPMVWNGMPANPTVLLSR</sequence>
<dbReference type="EC" id="3.4.24.-"/>
<dbReference type="EMBL" id="CP000011">
    <property type="protein sequence ID" value="AAY59193.1"/>
    <property type="status" value="ALT_INIT"/>
    <property type="molecule type" value="Genomic_DNA"/>
</dbReference>
<dbReference type="RefSeq" id="WP_004198081.1">
    <property type="nucleotide sequence ID" value="NC_006349.2"/>
</dbReference>
<dbReference type="RefSeq" id="YP_338443.1">
    <property type="nucleotide sequence ID" value="NC_006349.2"/>
</dbReference>
<dbReference type="SMR" id="Q4V2J8"/>
<dbReference type="KEGG" id="bma:BMAA1111"/>
<dbReference type="PATRIC" id="fig|243160.12.peg.4649"/>
<dbReference type="eggNOG" id="ENOG502Z8SD">
    <property type="taxonomic scope" value="Bacteria"/>
</dbReference>
<dbReference type="HOGENOM" id="CLU_451780_0_0_4"/>
<dbReference type="Proteomes" id="UP000006693">
    <property type="component" value="Chromosome 2"/>
</dbReference>
<dbReference type="GO" id="GO:0046872">
    <property type="term" value="F:metal ion binding"/>
    <property type="evidence" value="ECO:0007669"/>
    <property type="project" value="UniProtKB-KW"/>
</dbReference>
<dbReference type="GO" id="GO:0004222">
    <property type="term" value="F:metalloendopeptidase activity"/>
    <property type="evidence" value="ECO:0007669"/>
    <property type="project" value="InterPro"/>
</dbReference>
<dbReference type="GO" id="GO:0006508">
    <property type="term" value="P:proteolysis"/>
    <property type="evidence" value="ECO:0007669"/>
    <property type="project" value="UniProtKB-KW"/>
</dbReference>
<dbReference type="InterPro" id="IPR051256">
    <property type="entry name" value="Dictomallein"/>
</dbReference>
<dbReference type="InterPro" id="IPR019503">
    <property type="entry name" value="Peptidase_M66_dom"/>
</dbReference>
<dbReference type="PANTHER" id="PTHR39540">
    <property type="match status" value="1"/>
</dbReference>
<dbReference type="PANTHER" id="PTHR39540:SF1">
    <property type="entry name" value="DICTOMALLEIN-1-RELATED"/>
    <property type="match status" value="1"/>
</dbReference>
<dbReference type="Pfam" id="PF10462">
    <property type="entry name" value="Peptidase_M66"/>
    <property type="match status" value="1"/>
</dbReference>
<dbReference type="SUPFAM" id="SSF55486">
    <property type="entry name" value="Metalloproteases ('zincins'), catalytic domain"/>
    <property type="match status" value="1"/>
</dbReference>
<dbReference type="PROSITE" id="PS51694">
    <property type="entry name" value="PEPTIDASE_M66"/>
    <property type="match status" value="1"/>
</dbReference>